<gene>
    <name type="ordered locus">NGR_a03770</name>
    <name type="ORF">y4fD</name>
</gene>
<organism>
    <name type="scientific">Sinorhizobium fredii (strain NBRC 101917 / NGR234)</name>
    <dbReference type="NCBI Taxonomy" id="394"/>
    <lineage>
        <taxon>Bacteria</taxon>
        <taxon>Pseudomonadati</taxon>
        <taxon>Pseudomonadota</taxon>
        <taxon>Alphaproteobacteria</taxon>
        <taxon>Hyphomicrobiales</taxon>
        <taxon>Rhizobiaceae</taxon>
        <taxon>Sinorhizobium/Ensifer group</taxon>
        <taxon>Sinorhizobium</taxon>
    </lineage>
</organism>
<protein>
    <recommendedName>
        <fullName>Uncharacterized protein y4fD</fullName>
    </recommendedName>
</protein>
<comment type="subcellular location">
    <subcellularLocation>
        <location evidence="2">Cell membrane</location>
        <topology evidence="2">Multi-pass membrane protein</topology>
    </subcellularLocation>
</comment>
<keyword id="KW-1003">Cell membrane</keyword>
<keyword id="KW-0472">Membrane</keyword>
<keyword id="KW-0614">Plasmid</keyword>
<keyword id="KW-1185">Reference proteome</keyword>
<keyword id="KW-0812">Transmembrane</keyword>
<keyword id="KW-1133">Transmembrane helix</keyword>
<dbReference type="EMBL" id="U00090">
    <property type="protein sequence ID" value="AAB91661.1"/>
    <property type="molecule type" value="Genomic_DNA"/>
</dbReference>
<dbReference type="RefSeq" id="NP_443849.1">
    <property type="nucleotide sequence ID" value="NC_000914.2"/>
</dbReference>
<dbReference type="RefSeq" id="WP_010875390.1">
    <property type="nucleotide sequence ID" value="NC_000914.2"/>
</dbReference>
<dbReference type="KEGG" id="rhi:NGR_a03770"/>
<dbReference type="eggNOG" id="ENOG5030YUT">
    <property type="taxonomic scope" value="Bacteria"/>
</dbReference>
<dbReference type="HOGENOM" id="CLU_1255128_0_0_5"/>
<dbReference type="OrthoDB" id="8481672at2"/>
<dbReference type="Proteomes" id="UP000001054">
    <property type="component" value="Plasmid pNGR234a"/>
</dbReference>
<dbReference type="GO" id="GO:0005886">
    <property type="term" value="C:plasma membrane"/>
    <property type="evidence" value="ECO:0007669"/>
    <property type="project" value="UniProtKB-SubCell"/>
</dbReference>
<sequence length="220" mass="24627">MTQETLRKLWITLAILTLVVMINIHGSTQKSDFALIIKLPIELKFDGELTREAYAVHGMRFFALFFWLVPFLAVYHAKRSSGSASEAFPFRLLDIEPRSRPGKWVQGIAFVVLICLPLLTAIHLWRIVVGMQVCQHVSNALVNCADIWSRPVNAGPWDDTYRLANWGPTYDPLVEPVLAVILTAVSVYLTLRLVIEMRRAGSRPVATGNTPAEPITTSVT</sequence>
<name>Y4FD_SINFN</name>
<geneLocation type="plasmid">
    <name>sym pNGR234a</name>
</geneLocation>
<proteinExistence type="predicted"/>
<accession>P55442</accession>
<reference key="1">
    <citation type="journal article" date="1997" name="Nature">
        <title>Molecular basis of symbiosis between Rhizobium and legumes.</title>
        <authorList>
            <person name="Freiberg C.A."/>
            <person name="Fellay R."/>
            <person name="Bairoch A."/>
            <person name="Broughton W.J."/>
            <person name="Rosenthal A."/>
            <person name="Perret X."/>
        </authorList>
    </citation>
    <scope>NUCLEOTIDE SEQUENCE [LARGE SCALE GENOMIC DNA]</scope>
    <source>
        <strain>NBRC 101917 / NGR234</strain>
    </source>
</reference>
<reference key="2">
    <citation type="journal article" date="2009" name="Appl. Environ. Microbiol.">
        <title>Rhizobium sp. strain NGR234 possesses a remarkable number of secretion systems.</title>
        <authorList>
            <person name="Schmeisser C."/>
            <person name="Liesegang H."/>
            <person name="Krysciak D."/>
            <person name="Bakkou N."/>
            <person name="Le Quere A."/>
            <person name="Wollherr A."/>
            <person name="Heinemeyer I."/>
            <person name="Morgenstern B."/>
            <person name="Pommerening-Roeser A."/>
            <person name="Flores M."/>
            <person name="Palacios R."/>
            <person name="Brenner S."/>
            <person name="Gottschalk G."/>
            <person name="Schmitz R.A."/>
            <person name="Broughton W.J."/>
            <person name="Perret X."/>
            <person name="Strittmatter A.W."/>
            <person name="Streit W.R."/>
        </authorList>
    </citation>
    <scope>NUCLEOTIDE SEQUENCE [LARGE SCALE GENOMIC DNA]</scope>
    <source>
        <strain>NBRC 101917 / NGR234</strain>
    </source>
</reference>
<feature type="chain" id="PRO_0000200836" description="Uncharacterized protein y4fD">
    <location>
        <begin position="1"/>
        <end position="220"/>
    </location>
</feature>
<feature type="transmembrane region" description="Helical" evidence="1">
    <location>
        <begin position="9"/>
        <end position="29"/>
    </location>
</feature>
<feature type="transmembrane region" description="Helical" evidence="1">
    <location>
        <begin position="54"/>
        <end position="74"/>
    </location>
</feature>
<feature type="transmembrane region" description="Helical" evidence="1">
    <location>
        <begin position="105"/>
        <end position="125"/>
    </location>
</feature>
<feature type="transmembrane region" description="Helical" evidence="1">
    <location>
        <begin position="177"/>
        <end position="197"/>
    </location>
</feature>
<evidence type="ECO:0000255" key="1"/>
<evidence type="ECO:0000305" key="2"/>